<proteinExistence type="inferred from homology"/>
<gene>
    <name type="ordered locus">PSPA7_5038</name>
</gene>
<evidence type="ECO:0000255" key="1">
    <source>
        <dbReference type="HAMAP-Rule" id="MF_00636"/>
    </source>
</evidence>
<reference key="1">
    <citation type="submission" date="2007-06" db="EMBL/GenBank/DDBJ databases">
        <authorList>
            <person name="Dodson R.J."/>
            <person name="Harkins D."/>
            <person name="Paulsen I.T."/>
        </authorList>
    </citation>
    <scope>NUCLEOTIDE SEQUENCE [LARGE SCALE GENOMIC DNA]</scope>
    <source>
        <strain>DSM 24068 / PA7</strain>
    </source>
</reference>
<keyword id="KW-0067">ATP-binding</keyword>
<keyword id="KW-0342">GTP-binding</keyword>
<keyword id="KW-0547">Nucleotide-binding</keyword>
<name>Y5038_PSEP7</name>
<sequence length="286" mass="32269">MRLIIVSGRSGSGKSTALNVLEDNGFYCIDNLPASLLPDLAQRALLHTELLHPQVAVSIDARNLPSQLQRFPELLQEVRDNHINCDVLYLDADDETLLKRFSETRRRHPLTTDTRSLAEAIGDESQLLGPIADLADLKLDTTSLNLYQLRDTIKLRLLNKPEPGTAFLVESFGFKRGMPVDADLVFDVRCLPNPYWKPELRDHSGLEPEVREYLAAQPDVEEMYQDIVGYLNKWLPRFAASNRSYVTVAIGCTGGHHRSVYLAERIGAALRESLKNVQIRHRDLNS</sequence>
<dbReference type="EMBL" id="CP000744">
    <property type="protein sequence ID" value="ABR86062.1"/>
    <property type="molecule type" value="Genomic_DNA"/>
</dbReference>
<dbReference type="RefSeq" id="WP_003155100.1">
    <property type="nucleotide sequence ID" value="NC_009656.1"/>
</dbReference>
<dbReference type="SMR" id="A6VBD9"/>
<dbReference type="GeneID" id="77222966"/>
<dbReference type="KEGG" id="pap:PSPA7_5038"/>
<dbReference type="HOGENOM" id="CLU_059558_1_1_6"/>
<dbReference type="Proteomes" id="UP000001582">
    <property type="component" value="Chromosome"/>
</dbReference>
<dbReference type="GO" id="GO:0005524">
    <property type="term" value="F:ATP binding"/>
    <property type="evidence" value="ECO:0007669"/>
    <property type="project" value="UniProtKB-UniRule"/>
</dbReference>
<dbReference type="GO" id="GO:0005525">
    <property type="term" value="F:GTP binding"/>
    <property type="evidence" value="ECO:0007669"/>
    <property type="project" value="UniProtKB-UniRule"/>
</dbReference>
<dbReference type="Gene3D" id="3.40.50.300">
    <property type="entry name" value="P-loop containing nucleotide triphosphate hydrolases"/>
    <property type="match status" value="1"/>
</dbReference>
<dbReference type="HAMAP" id="MF_00636">
    <property type="entry name" value="RapZ_like"/>
    <property type="match status" value="1"/>
</dbReference>
<dbReference type="InterPro" id="IPR027417">
    <property type="entry name" value="P-loop_NTPase"/>
</dbReference>
<dbReference type="InterPro" id="IPR005337">
    <property type="entry name" value="RapZ-like"/>
</dbReference>
<dbReference type="InterPro" id="IPR053930">
    <property type="entry name" value="RapZ-like_N"/>
</dbReference>
<dbReference type="InterPro" id="IPR053931">
    <property type="entry name" value="RapZ_C"/>
</dbReference>
<dbReference type="NCBIfam" id="NF003828">
    <property type="entry name" value="PRK05416.1"/>
    <property type="match status" value="1"/>
</dbReference>
<dbReference type="PANTHER" id="PTHR30448">
    <property type="entry name" value="RNASE ADAPTER PROTEIN RAPZ"/>
    <property type="match status" value="1"/>
</dbReference>
<dbReference type="PANTHER" id="PTHR30448:SF0">
    <property type="entry name" value="RNASE ADAPTER PROTEIN RAPZ"/>
    <property type="match status" value="1"/>
</dbReference>
<dbReference type="Pfam" id="PF22740">
    <property type="entry name" value="PapZ_C"/>
    <property type="match status" value="1"/>
</dbReference>
<dbReference type="Pfam" id="PF03668">
    <property type="entry name" value="RapZ-like_N"/>
    <property type="match status" value="1"/>
</dbReference>
<dbReference type="PIRSF" id="PIRSF005052">
    <property type="entry name" value="P-loopkin"/>
    <property type="match status" value="1"/>
</dbReference>
<dbReference type="SUPFAM" id="SSF52540">
    <property type="entry name" value="P-loop containing nucleoside triphosphate hydrolases"/>
    <property type="match status" value="1"/>
</dbReference>
<protein>
    <recommendedName>
        <fullName evidence="1">Nucleotide-binding protein PSPA7_5038</fullName>
    </recommendedName>
</protein>
<accession>A6VBD9</accession>
<comment type="function">
    <text evidence="1">Displays ATPase and GTPase activities.</text>
</comment>
<comment type="similarity">
    <text evidence="1">Belongs to the RapZ-like family.</text>
</comment>
<organism>
    <name type="scientific">Pseudomonas paraeruginosa (strain DSM 24068 / PA7)</name>
    <name type="common">Pseudomonas aeruginosa (strain PA7)</name>
    <dbReference type="NCBI Taxonomy" id="381754"/>
    <lineage>
        <taxon>Bacteria</taxon>
        <taxon>Pseudomonadati</taxon>
        <taxon>Pseudomonadota</taxon>
        <taxon>Gammaproteobacteria</taxon>
        <taxon>Pseudomonadales</taxon>
        <taxon>Pseudomonadaceae</taxon>
        <taxon>Pseudomonas</taxon>
        <taxon>Pseudomonas paraeruginosa</taxon>
    </lineage>
</organism>
<feature type="chain" id="PRO_1000061438" description="Nucleotide-binding protein PSPA7_5038">
    <location>
        <begin position="1"/>
        <end position="286"/>
    </location>
</feature>
<feature type="binding site" evidence="1">
    <location>
        <begin position="8"/>
        <end position="15"/>
    </location>
    <ligand>
        <name>ATP</name>
        <dbReference type="ChEBI" id="CHEBI:30616"/>
    </ligand>
</feature>
<feature type="binding site" evidence="1">
    <location>
        <begin position="60"/>
        <end position="63"/>
    </location>
    <ligand>
        <name>GTP</name>
        <dbReference type="ChEBI" id="CHEBI:37565"/>
    </ligand>
</feature>